<proteinExistence type="evidence at transcript level"/>
<comment type="function">
    <text evidence="2 3">5' to 3' RNA helicase that is involved in a number of cellular roles ranging from mRNA metabolism and translation, modulation of viral infectivity, inhibition of retrotransposition, or regulation of synaptic transmission. Plays an important role in innate antiviral immunity by promoting type I interferon production. Mechanistically, specifically uses IKKepsilon/IKBKE as the mediator kinase for IRF3 activation. Contributes to UPF1 mRNA target degradation by translocation along 3' UTRs. Required for microRNA (miRNA)-mediated gene silencing by the RNA-induced silencing complex (RISC). Required for both miRNA-mediated translational repression and miRNA-mediated cleavage of complementary mRNAs by RISC. In cooperation with FMR1, regulates miRNA-mediated translational repression by AGO2. Restricts retrotransposition of long interspersed element-1 (LINE-1) in cooperation with TUT4 and TUT7 counteracting the RNA chaperonne activity of L1RE1. Facilitates LINE-1 uridylation by TUT4 and TUT7 (By similarity). Required for embryonic viability and for normal central nervous system development and function. Plays two critical roles in early brain development: suppresses retroelements in the nucleus by directly inhibiting cDNA synthesis, while regulates cytoskeletal mRNAs to influence neurite outgrowth in the cytosol (By similarity). May function as a messenger ribonucleoprotein (mRNP) clearance factor (By similarity).</text>
</comment>
<comment type="catalytic activity">
    <reaction evidence="3">
        <text>ATP + H2O = ADP + phosphate + H(+)</text>
        <dbReference type="Rhea" id="RHEA:13065"/>
        <dbReference type="ChEBI" id="CHEBI:15377"/>
        <dbReference type="ChEBI" id="CHEBI:15378"/>
        <dbReference type="ChEBI" id="CHEBI:30616"/>
        <dbReference type="ChEBI" id="CHEBI:43474"/>
        <dbReference type="ChEBI" id="CHEBI:456216"/>
        <dbReference type="EC" id="3.6.4.13"/>
    </reaction>
</comment>
<comment type="subunit">
    <text evidence="2 3">Interacts with DICER1, AGO2, TARBP2, EIF6 and RPL7A (60S ribosome subunit); they form a large RNA-induced silencing complex (RISC). Interacts with APOBEC3G in an RNA-dependent manner. Interacts with TRIM71 (via NHL repeats) in an RNA-dependent manner. Interacts with both protein products of LIRE1, ORF1p and ORF2p. Interacts with TUT4 and, to a lesser extent, TUT7; the interactions are RNA-dependent. Interacts with AGO2, TNRC6B and UPF1; the interactions are direct and RNA-dependent. Interacts with FMR1; this interaction is direct, occurs in an RNA-dependent manner on polysomes and induces association of MOV10 with RNAs. Interacts with SHFL; the interaction increases in presence of RNA (By similarity). Interacts with DHX34; the interaction is-RNA independent (By similarity). Interacts with RBM46 (By similarity).</text>
</comment>
<comment type="subcellular location">
    <subcellularLocation>
        <location evidence="3">Cytoplasm</location>
        <location evidence="3">P-body</location>
    </subcellularLocation>
    <subcellularLocation>
        <location evidence="3">Cytoplasm</location>
        <location evidence="3">Cytoplasmic ribonucleoprotein granule</location>
    </subcellularLocation>
    <subcellularLocation>
        <location evidence="3">Cytoplasm</location>
        <location evidence="3">Stress granule</location>
    </subcellularLocation>
    <subcellularLocation>
        <location evidence="2">Nucleus</location>
    </subcellularLocation>
    <subcellularLocation>
        <location evidence="2">Cytoplasm</location>
    </subcellularLocation>
    <text evidence="2 3">Co-enriched in cytoplasmic foci with TUT4 (By similarity). In developing neurons, localizes both in nucleus and cytoplasm, but in the adulthood it is only cytoplasmic (By similarity).</text>
</comment>
<comment type="PTM">
    <text evidence="3">Ubiquitinated by the DCX(DCAF12) complex that specifically recognizes the glutamate-leucine (Glu-Leu) degron at the C-terminus, leading to its degradation.</text>
</comment>
<comment type="similarity">
    <text evidence="5">Belongs to the DNA2/NAM7 helicase family. SDE3 subfamily.</text>
</comment>
<accession>Q0V8H6</accession>
<reference key="1">
    <citation type="journal article" date="2005" name="BMC Genomics">
        <title>Characterization of 954 bovine full-CDS cDNA sequences.</title>
        <authorList>
            <person name="Harhay G.P."/>
            <person name="Sonstegard T.S."/>
            <person name="Keele J.W."/>
            <person name="Heaton M.P."/>
            <person name="Clawson M.L."/>
            <person name="Snelling W.M."/>
            <person name="Wiedmann R.T."/>
            <person name="Van Tassell C.P."/>
            <person name="Smith T.P.L."/>
        </authorList>
    </citation>
    <scope>NUCLEOTIDE SEQUENCE [LARGE SCALE MRNA]</scope>
</reference>
<reference key="2">
    <citation type="submission" date="2007-06" db="EMBL/GenBank/DDBJ databases">
        <authorList>
            <consortium name="NIH - Mammalian Gene Collection (MGC) project"/>
        </authorList>
    </citation>
    <scope>NUCLEOTIDE SEQUENCE [LARGE SCALE MRNA]</scope>
    <source>
        <strain>Hereford</strain>
        <tissue>Thymus</tissue>
    </source>
</reference>
<dbReference type="EC" id="3.6.4.13" evidence="3"/>
<dbReference type="EMBL" id="BT026242">
    <property type="protein sequence ID" value="ABG67081.1"/>
    <property type="molecule type" value="mRNA"/>
</dbReference>
<dbReference type="EMBL" id="BC148151">
    <property type="protein sequence ID" value="AAI48152.1"/>
    <property type="molecule type" value="mRNA"/>
</dbReference>
<dbReference type="RefSeq" id="NP_001069307.1">
    <property type="nucleotide sequence ID" value="NM_001075839.1"/>
</dbReference>
<dbReference type="RefSeq" id="XP_059740547.1">
    <property type="nucleotide sequence ID" value="XM_059884564.1"/>
</dbReference>
<dbReference type="SMR" id="Q0V8H6"/>
<dbReference type="FunCoup" id="Q0V8H6">
    <property type="interactions" value="1222"/>
</dbReference>
<dbReference type="STRING" id="9913.ENSBTAP00000058600"/>
<dbReference type="PaxDb" id="9913-ENSBTAP00000018997"/>
<dbReference type="PeptideAtlas" id="Q0V8H6"/>
<dbReference type="GeneID" id="523206"/>
<dbReference type="KEGG" id="bta:523206"/>
<dbReference type="CTD" id="4343"/>
<dbReference type="VEuPathDB" id="HostDB:ENSBTAG00000014297"/>
<dbReference type="eggNOG" id="KOG1804">
    <property type="taxonomic scope" value="Eukaryota"/>
</dbReference>
<dbReference type="HOGENOM" id="CLU_001666_6_1_1"/>
<dbReference type="InParanoid" id="Q0V8H6"/>
<dbReference type="OMA" id="NDWDQDQ"/>
<dbReference type="OrthoDB" id="6513042at2759"/>
<dbReference type="TreeFam" id="TF323999"/>
<dbReference type="Proteomes" id="UP000009136">
    <property type="component" value="Chromosome 3"/>
</dbReference>
<dbReference type="Bgee" id="ENSBTAG00000014297">
    <property type="expression patterns" value="Expressed in diaphragm and 106 other cell types or tissues"/>
</dbReference>
<dbReference type="GO" id="GO:0036464">
    <property type="term" value="C:cytoplasmic ribonucleoprotein granule"/>
    <property type="evidence" value="ECO:0000250"/>
    <property type="project" value="UniProtKB"/>
</dbReference>
<dbReference type="GO" id="GO:0010494">
    <property type="term" value="C:cytoplasmic stress granule"/>
    <property type="evidence" value="ECO:0007669"/>
    <property type="project" value="UniProtKB-SubCell"/>
</dbReference>
<dbReference type="GO" id="GO:0005829">
    <property type="term" value="C:cytosol"/>
    <property type="evidence" value="ECO:0000250"/>
    <property type="project" value="UniProtKB"/>
</dbReference>
<dbReference type="GO" id="GO:0005634">
    <property type="term" value="C:nucleus"/>
    <property type="evidence" value="ECO:0000250"/>
    <property type="project" value="UniProtKB"/>
</dbReference>
<dbReference type="GO" id="GO:0043186">
    <property type="term" value="C:P granule"/>
    <property type="evidence" value="ECO:0000318"/>
    <property type="project" value="GO_Central"/>
</dbReference>
<dbReference type="GO" id="GO:0000932">
    <property type="term" value="C:P-body"/>
    <property type="evidence" value="ECO:0000250"/>
    <property type="project" value="UniProtKB"/>
</dbReference>
<dbReference type="GO" id="GO:0032574">
    <property type="term" value="F:5'-3' RNA helicase activity"/>
    <property type="evidence" value="ECO:0000250"/>
    <property type="project" value="UniProtKB"/>
</dbReference>
<dbReference type="GO" id="GO:0005524">
    <property type="term" value="F:ATP binding"/>
    <property type="evidence" value="ECO:0007669"/>
    <property type="project" value="UniProtKB-KW"/>
</dbReference>
<dbReference type="GO" id="GO:0016887">
    <property type="term" value="F:ATP hydrolysis activity"/>
    <property type="evidence" value="ECO:0007669"/>
    <property type="project" value="RHEA"/>
</dbReference>
<dbReference type="GO" id="GO:0003723">
    <property type="term" value="F:RNA binding"/>
    <property type="evidence" value="ECO:0000250"/>
    <property type="project" value="UniProtKB"/>
</dbReference>
<dbReference type="GO" id="GO:0061158">
    <property type="term" value="P:3'-UTR-mediated mRNA destabilization"/>
    <property type="evidence" value="ECO:0000250"/>
    <property type="project" value="UniProtKB"/>
</dbReference>
<dbReference type="GO" id="GO:0035279">
    <property type="term" value="P:miRNA-mediated gene silencing by mRNA destabilization"/>
    <property type="evidence" value="ECO:0000250"/>
    <property type="project" value="UniProtKB"/>
</dbReference>
<dbReference type="GO" id="GO:0035195">
    <property type="term" value="P:miRNA-mediated post-transcriptional gene silencing"/>
    <property type="evidence" value="ECO:0000250"/>
    <property type="project" value="UniProtKB"/>
</dbReference>
<dbReference type="GO" id="GO:0061014">
    <property type="term" value="P:positive regulation of mRNA catabolic process"/>
    <property type="evidence" value="ECO:0000250"/>
    <property type="project" value="UniProtKB"/>
</dbReference>
<dbReference type="GO" id="GO:0150011">
    <property type="term" value="P:regulation of neuron projection arborization"/>
    <property type="evidence" value="ECO:0000250"/>
    <property type="project" value="UniProtKB"/>
</dbReference>
<dbReference type="GO" id="GO:0035194">
    <property type="term" value="P:regulatory ncRNA-mediated post-transcriptional gene silencing"/>
    <property type="evidence" value="ECO:0000318"/>
    <property type="project" value="GO_Central"/>
</dbReference>
<dbReference type="GO" id="GO:0010526">
    <property type="term" value="P:transposable element silencing"/>
    <property type="evidence" value="ECO:0000250"/>
    <property type="project" value="UniProtKB"/>
</dbReference>
<dbReference type="GO" id="GO:0141008">
    <property type="term" value="P:transposable element silencing by mRNA destabilization"/>
    <property type="evidence" value="ECO:0000250"/>
    <property type="project" value="UniProtKB"/>
</dbReference>
<dbReference type="CDD" id="cd18038">
    <property type="entry name" value="DEXXQc_Helz-like"/>
    <property type="match status" value="1"/>
</dbReference>
<dbReference type="CDD" id="cd18808">
    <property type="entry name" value="SF1_C_Upf1"/>
    <property type="match status" value="1"/>
</dbReference>
<dbReference type="FunFam" id="3.40.50.300:FF:000608">
    <property type="entry name" value="Mov10 RISC complex RNA helicase"/>
    <property type="match status" value="1"/>
</dbReference>
<dbReference type="FunFam" id="3.40.50.300:FF:000758">
    <property type="entry name" value="Mov10 RISC complex RNA helicase"/>
    <property type="match status" value="1"/>
</dbReference>
<dbReference type="Gene3D" id="3.40.50.300">
    <property type="entry name" value="P-loop containing nucleotide triphosphate hydrolases"/>
    <property type="match status" value="2"/>
</dbReference>
<dbReference type="InterPro" id="IPR041679">
    <property type="entry name" value="DNA2/NAM7-like_C"/>
</dbReference>
<dbReference type="InterPro" id="IPR041677">
    <property type="entry name" value="DNA2/NAM7_AAA_11"/>
</dbReference>
<dbReference type="InterPro" id="IPR049080">
    <property type="entry name" value="MOV-10-like_beta-barrel"/>
</dbReference>
<dbReference type="InterPro" id="IPR026122">
    <property type="entry name" value="MOV-10/SDE3_DEXXQ/H-box"/>
</dbReference>
<dbReference type="InterPro" id="IPR049079">
    <property type="entry name" value="Mov-10_helical"/>
</dbReference>
<dbReference type="InterPro" id="IPR049077">
    <property type="entry name" value="MOV-10_Ig-like"/>
</dbReference>
<dbReference type="InterPro" id="IPR049075">
    <property type="entry name" value="MOV-10_N"/>
</dbReference>
<dbReference type="InterPro" id="IPR027417">
    <property type="entry name" value="P-loop_NTPase"/>
</dbReference>
<dbReference type="InterPro" id="IPR047187">
    <property type="entry name" value="SF1_C_Upf1"/>
</dbReference>
<dbReference type="PANTHER" id="PTHR45418">
    <property type="entry name" value="CANCER/TESTIS ANTIGEN 55"/>
    <property type="match status" value="1"/>
</dbReference>
<dbReference type="PANTHER" id="PTHR45418:SF1">
    <property type="entry name" value="CANCER_TESTIS ANTIGEN 55"/>
    <property type="match status" value="1"/>
</dbReference>
<dbReference type="Pfam" id="PF13086">
    <property type="entry name" value="AAA_11"/>
    <property type="match status" value="2"/>
</dbReference>
<dbReference type="Pfam" id="PF13087">
    <property type="entry name" value="AAA_12"/>
    <property type="match status" value="1"/>
</dbReference>
<dbReference type="Pfam" id="PF21634">
    <property type="entry name" value="MOV-10_beta-barrel"/>
    <property type="match status" value="1"/>
</dbReference>
<dbReference type="Pfam" id="PF21635">
    <property type="entry name" value="Mov-10_helical"/>
    <property type="match status" value="1"/>
</dbReference>
<dbReference type="Pfam" id="PF21633">
    <property type="entry name" value="MOV-10_Ig-like"/>
    <property type="match status" value="1"/>
</dbReference>
<dbReference type="Pfam" id="PF21632">
    <property type="entry name" value="MOV-10_N"/>
    <property type="match status" value="1"/>
</dbReference>
<dbReference type="SUPFAM" id="SSF52540">
    <property type="entry name" value="P-loop containing nucleoside triphosphate hydrolases"/>
    <property type="match status" value="1"/>
</dbReference>
<keyword id="KW-0007">Acetylation</keyword>
<keyword id="KW-0067">ATP-binding</keyword>
<keyword id="KW-0963">Cytoplasm</keyword>
<keyword id="KW-0347">Helicase</keyword>
<keyword id="KW-0378">Hydrolase</keyword>
<keyword id="KW-0547">Nucleotide-binding</keyword>
<keyword id="KW-0539">Nucleus</keyword>
<keyword id="KW-0597">Phosphoprotein</keyword>
<keyword id="KW-1185">Reference proteome</keyword>
<keyword id="KW-0694">RNA-binding</keyword>
<keyword id="KW-0943">RNA-mediated gene silencing</keyword>
<keyword id="KW-0832">Ubl conjugation</keyword>
<feature type="chain" id="PRO_0000374666" description="Putative helicase MOV-10">
    <location>
        <begin position="1"/>
        <end position="1003"/>
    </location>
</feature>
<feature type="region of interest" description="Interaction with AGO2 and APOBEC3G" evidence="1">
    <location>
        <begin position="921"/>
        <end position="965"/>
    </location>
</feature>
<feature type="region of interest" description="Disordered" evidence="4">
    <location>
        <begin position="968"/>
        <end position="1003"/>
    </location>
</feature>
<feature type="short sequence motif" description="DEAG box">
    <location>
        <begin position="645"/>
        <end position="648"/>
    </location>
</feature>
<feature type="compositionally biased region" description="Basic and acidic residues" evidence="4">
    <location>
        <begin position="976"/>
        <end position="985"/>
    </location>
</feature>
<feature type="binding site" evidence="1">
    <location>
        <begin position="524"/>
        <end position="531"/>
    </location>
    <ligand>
        <name>ATP</name>
        <dbReference type="ChEBI" id="CHEBI:30616"/>
    </ligand>
</feature>
<feature type="modified residue" description="N6-acetyllysine" evidence="3">
    <location>
        <position position="148"/>
    </location>
</feature>
<feature type="modified residue" description="Phosphothreonine" evidence="3">
    <location>
        <position position="160"/>
    </location>
</feature>
<feature type="modified residue" description="Phosphothreonine" evidence="3">
    <location>
        <position position="254"/>
    </location>
</feature>
<feature type="modified residue" description="Phosphoserine" evidence="3">
    <location>
        <position position="432"/>
    </location>
</feature>
<feature type="modified residue" description="Phosphoserine" evidence="3">
    <location>
        <position position="969"/>
    </location>
</feature>
<feature type="modified residue" description="Phosphoserine" evidence="3">
    <location>
        <position position="977"/>
    </location>
</feature>
<gene>
    <name type="primary">MOV10</name>
</gene>
<protein>
    <recommendedName>
        <fullName>Putative helicase MOV-10</fullName>
        <ecNumber evidence="3">3.6.4.13</ecNumber>
    </recommendedName>
</protein>
<organism>
    <name type="scientific">Bos taurus</name>
    <name type="common">Bovine</name>
    <dbReference type="NCBI Taxonomy" id="9913"/>
    <lineage>
        <taxon>Eukaryota</taxon>
        <taxon>Metazoa</taxon>
        <taxon>Chordata</taxon>
        <taxon>Craniata</taxon>
        <taxon>Vertebrata</taxon>
        <taxon>Euteleostomi</taxon>
        <taxon>Mammalia</taxon>
        <taxon>Eutheria</taxon>
        <taxon>Laurasiatheria</taxon>
        <taxon>Artiodactyla</taxon>
        <taxon>Ruminantia</taxon>
        <taxon>Pecora</taxon>
        <taxon>Bovidae</taxon>
        <taxon>Bovinae</taxon>
        <taxon>Bos</taxon>
    </lineage>
</organism>
<sequence length="1003" mass="113885">MPSKFSCRQLRETGQRFENFLVDRGQDRETDRERLRTIYNQDFKTSFGTPAPGFSSMLYGMKIANLAYVTKTRVRFFGLDRWADVWFPEKRRMKPGLEMSKHHRSLLATIFHDRAEYMHGKHGVNVEVQGPHEARDGQLLIRLDLNRKEVLTLRLRNGGTQPVTLTHLFPFCRTPQFSFCNGDRELPCLLGPGECYELHVHCKTSFVGYFPATVLWELLGPGEPGSEGAGTFYIARFLAAVAHSPLAAQLKPTTPFKRTQVSRNPVVTRRIEEGERPDRAKNYDLEFSLPLGTYYPPPRLRQLLPVLLRGTSIFTAPKEIAEIKAQLQTTLKWRNYEVKLRLLLHLEELQMEHDIRHYDLESVPMTWDPIDRNPRLLTLEVPGVAESRPSVLRGDHLFALLSSETHHEDPVTYKGFVHKVELDRVKLSFSTSLLSRFVDGLTFKVNFTFNRQPLRVQHRALELTGRWPLEPMLFPVASRGVPLLPSDVKLKLYDRSLESNPEQLQAMKHIVMGTTRPAPYIIFGPPGTGKTVTLVEAIKQVVKHLPKAHILACAPSNSGADLLCQRLRVHLPSSIYRLLAPSRDIHLVPEDIKPCCNWDAKKGDFVFPSKKKLQEYRVLITTLITASRLVSAQFPIDHFTHIFIDEAGHAMEPESLVAIAGLMEVKEADNPGGQLVLAGDPRQLGPVLRCPLTQKHGLGYSLLERLLTFNALYKKGPDGYNPQFITKLLRNYRSHPTILDVPNRLYYDGELQACADVVDRERFCRWEGLPRQDFPIIFHGVMGKDEREGNSPSFFNPEEAATVTSYLKQLLAPSSKKGKARLSPRSVGVISPYRKQVEKIRYCITKLDKQLRGLDDIKDLKVGSVEEFQGQERSVILISTVRSSQSFVQLDLDFNLGFLKNPKRFNVAVTRAKALLIVVGNPLLLGHDPDWKVFLEFCKENGGYTGCPFPAKLDLQQGQNLLQGLSKLSPSTSGLKSHDYLPQEREGEEGLSLQVEPEWRNEL</sequence>
<name>MOV10_BOVIN</name>
<evidence type="ECO:0000250" key="1"/>
<evidence type="ECO:0000250" key="2">
    <source>
        <dbReference type="UniProtKB" id="P23249"/>
    </source>
</evidence>
<evidence type="ECO:0000250" key="3">
    <source>
        <dbReference type="UniProtKB" id="Q9HCE1"/>
    </source>
</evidence>
<evidence type="ECO:0000256" key="4">
    <source>
        <dbReference type="SAM" id="MobiDB-lite"/>
    </source>
</evidence>
<evidence type="ECO:0000305" key="5"/>